<keyword id="KW-0067">ATP-binding</keyword>
<keyword id="KW-0325">Glycoprotein</keyword>
<keyword id="KW-0472">Membrane</keyword>
<keyword id="KW-0547">Nucleotide-binding</keyword>
<keyword id="KW-1185">Reference proteome</keyword>
<keyword id="KW-0677">Repeat</keyword>
<keyword id="KW-0812">Transmembrane</keyword>
<keyword id="KW-1133">Transmembrane helix</keyword>
<keyword id="KW-0813">Transport</keyword>
<comment type="subcellular location">
    <subcellularLocation>
        <location evidence="3">Membrane</location>
        <topology evidence="3">Multi-pass membrane protein</topology>
    </subcellularLocation>
</comment>
<comment type="similarity">
    <text evidence="4">Belongs to the ABC transporter superfamily. ABCB family. Multidrug resistance exporter (TC 3.A.1.201) subfamily.</text>
</comment>
<comment type="caution">
    <text evidence="4">Could be the product of a pseudogene.</text>
</comment>
<accession>Q9LHK4</accession>
<dbReference type="EMBL" id="AP002043">
    <property type="protein sequence ID" value="BAB02613.1"/>
    <property type="molecule type" value="Genomic_DNA"/>
</dbReference>
<dbReference type="EMBL" id="CP002686">
    <property type="status" value="NOT_ANNOTATED_CDS"/>
    <property type="molecule type" value="Genomic_DNA"/>
</dbReference>
<dbReference type="SMR" id="Q9LHK4"/>
<dbReference type="FunCoup" id="Q9LHK4">
    <property type="interactions" value="31"/>
</dbReference>
<dbReference type="STRING" id="3702.Q9LHK4"/>
<dbReference type="GlyCosmos" id="Q9LHK4">
    <property type="glycosylation" value="7 sites, No reported glycans"/>
</dbReference>
<dbReference type="GlyGen" id="Q9LHK4">
    <property type="glycosylation" value="7 sites"/>
</dbReference>
<dbReference type="Araport" id="AT3G30875"/>
<dbReference type="TAIR" id="AT3G30875"/>
<dbReference type="InParanoid" id="Q9LHK4"/>
<dbReference type="Proteomes" id="UP000006548">
    <property type="component" value="Chromosome 3"/>
</dbReference>
<dbReference type="ExpressionAtlas" id="Q9LHK4">
    <property type="expression patterns" value="baseline and differential"/>
</dbReference>
<dbReference type="GO" id="GO:0016020">
    <property type="term" value="C:membrane"/>
    <property type="evidence" value="ECO:0000318"/>
    <property type="project" value="GO_Central"/>
</dbReference>
<dbReference type="GO" id="GO:0140359">
    <property type="term" value="F:ABC-type transporter activity"/>
    <property type="evidence" value="ECO:0007669"/>
    <property type="project" value="InterPro"/>
</dbReference>
<dbReference type="GO" id="GO:0005524">
    <property type="term" value="F:ATP binding"/>
    <property type="evidence" value="ECO:0007669"/>
    <property type="project" value="UniProtKB-KW"/>
</dbReference>
<dbReference type="GO" id="GO:0016887">
    <property type="term" value="F:ATP hydrolysis activity"/>
    <property type="evidence" value="ECO:0007669"/>
    <property type="project" value="InterPro"/>
</dbReference>
<dbReference type="GO" id="GO:0042626">
    <property type="term" value="F:ATPase-coupled transmembrane transporter activity"/>
    <property type="evidence" value="ECO:0000318"/>
    <property type="project" value="GO_Central"/>
</dbReference>
<dbReference type="GO" id="GO:0055085">
    <property type="term" value="P:transmembrane transport"/>
    <property type="evidence" value="ECO:0000318"/>
    <property type="project" value="GO_Central"/>
</dbReference>
<dbReference type="CDD" id="cd18577">
    <property type="entry name" value="ABC_6TM_Pgp_ABCB1_D1_like"/>
    <property type="match status" value="1"/>
</dbReference>
<dbReference type="CDD" id="cd18578">
    <property type="entry name" value="ABC_6TM_Pgp_ABCB1_D2_like"/>
    <property type="match status" value="1"/>
</dbReference>
<dbReference type="FunFam" id="1.20.1560.10:FF:000029">
    <property type="entry name" value="ABC transporter B family member 1"/>
    <property type="match status" value="1"/>
</dbReference>
<dbReference type="FunFam" id="3.40.50.300:FF:000240">
    <property type="entry name" value="ABC transporter B family member 20"/>
    <property type="match status" value="1"/>
</dbReference>
<dbReference type="FunFam" id="3.40.50.300:FF:000205">
    <property type="entry name" value="ABC transporter B family member 4"/>
    <property type="match status" value="1"/>
</dbReference>
<dbReference type="Gene3D" id="1.20.1560.10">
    <property type="entry name" value="ABC transporter type 1, transmembrane domain"/>
    <property type="match status" value="2"/>
</dbReference>
<dbReference type="Gene3D" id="3.40.50.300">
    <property type="entry name" value="P-loop containing nucleotide triphosphate hydrolases"/>
    <property type="match status" value="2"/>
</dbReference>
<dbReference type="InterPro" id="IPR003593">
    <property type="entry name" value="AAA+_ATPase"/>
</dbReference>
<dbReference type="InterPro" id="IPR011527">
    <property type="entry name" value="ABC1_TM_dom"/>
</dbReference>
<dbReference type="InterPro" id="IPR036640">
    <property type="entry name" value="ABC1_TM_sf"/>
</dbReference>
<dbReference type="InterPro" id="IPR003439">
    <property type="entry name" value="ABC_transporter-like_ATP-bd"/>
</dbReference>
<dbReference type="InterPro" id="IPR017871">
    <property type="entry name" value="ABC_transporter-like_CS"/>
</dbReference>
<dbReference type="InterPro" id="IPR027417">
    <property type="entry name" value="P-loop_NTPase"/>
</dbReference>
<dbReference type="PANTHER" id="PTHR45136">
    <property type="entry name" value="ABC TRANSPORTER DOMAIN-CONTAINING PROTEIN"/>
    <property type="match status" value="1"/>
</dbReference>
<dbReference type="PANTHER" id="PTHR45136:SF2">
    <property type="entry name" value="ABC TRANSPORTER DOMAIN-CONTAINING PROTEIN"/>
    <property type="match status" value="1"/>
</dbReference>
<dbReference type="Pfam" id="PF00664">
    <property type="entry name" value="ABC_membrane"/>
    <property type="match status" value="2"/>
</dbReference>
<dbReference type="Pfam" id="PF00005">
    <property type="entry name" value="ABC_tran"/>
    <property type="match status" value="2"/>
</dbReference>
<dbReference type="SMART" id="SM00382">
    <property type="entry name" value="AAA"/>
    <property type="match status" value="2"/>
</dbReference>
<dbReference type="SUPFAM" id="SSF90123">
    <property type="entry name" value="ABC transporter transmembrane region"/>
    <property type="match status" value="2"/>
</dbReference>
<dbReference type="SUPFAM" id="SSF52540">
    <property type="entry name" value="P-loop containing nucleoside triphosphate hydrolases"/>
    <property type="match status" value="2"/>
</dbReference>
<dbReference type="PROSITE" id="PS50929">
    <property type="entry name" value="ABC_TM1F"/>
    <property type="match status" value="2"/>
</dbReference>
<dbReference type="PROSITE" id="PS00211">
    <property type="entry name" value="ABC_TRANSPORTER_1"/>
    <property type="match status" value="2"/>
</dbReference>
<dbReference type="PROSITE" id="PS50893">
    <property type="entry name" value="ABC_TRANSPORTER_2"/>
    <property type="match status" value="2"/>
</dbReference>
<feature type="chain" id="PRO_0000227933" description="Putative ABC transporter B family member 8">
    <location>
        <begin position="1"/>
        <end position="1241"/>
    </location>
</feature>
<feature type="transmembrane region" description="Helical" evidence="3">
    <location>
        <begin position="24"/>
        <end position="44"/>
    </location>
</feature>
<feature type="transmembrane region" description="Helical" evidence="3">
    <location>
        <begin position="82"/>
        <end position="102"/>
    </location>
</feature>
<feature type="transmembrane region" description="Helical" evidence="3">
    <location>
        <begin position="157"/>
        <end position="177"/>
    </location>
</feature>
<feature type="transmembrane region" description="Helical" evidence="3">
    <location>
        <begin position="183"/>
        <end position="203"/>
    </location>
</feature>
<feature type="transmembrane region" description="Helical" evidence="3">
    <location>
        <begin position="263"/>
        <end position="283"/>
    </location>
</feature>
<feature type="transmembrane region" description="Helical" evidence="3">
    <location>
        <begin position="297"/>
        <end position="317"/>
    </location>
</feature>
<feature type="transmembrane region" description="Helical" evidence="3">
    <location>
        <begin position="686"/>
        <end position="706"/>
    </location>
</feature>
<feature type="transmembrane region" description="Helical" evidence="3">
    <location>
        <begin position="716"/>
        <end position="736"/>
    </location>
</feature>
<feature type="transmembrane region" description="Helical" evidence="3">
    <location>
        <begin position="797"/>
        <end position="815"/>
    </location>
</feature>
<feature type="transmembrane region" description="Helical" evidence="3">
    <location>
        <begin position="821"/>
        <end position="838"/>
    </location>
</feature>
<feature type="transmembrane region" description="Helical" evidence="3">
    <location>
        <begin position="899"/>
        <end position="919"/>
    </location>
</feature>
<feature type="transmembrane region" description="Helical" evidence="3">
    <location>
        <begin position="933"/>
        <end position="953"/>
    </location>
</feature>
<feature type="domain" description="ABC transmembrane type-1 1" evidence="3">
    <location>
        <begin position="33"/>
        <end position="323"/>
    </location>
</feature>
<feature type="domain" description="ABC transporter 1" evidence="2">
    <location>
        <begin position="360"/>
        <end position="596"/>
    </location>
</feature>
<feature type="domain" description="ABC transmembrane type-1 2" evidence="3">
    <location>
        <begin position="676"/>
        <end position="964"/>
    </location>
</feature>
<feature type="domain" description="ABC transporter 2" evidence="2">
    <location>
        <begin position="998"/>
        <end position="1236"/>
    </location>
</feature>
<feature type="binding site" evidence="2">
    <location>
        <begin position="395"/>
        <end position="402"/>
    </location>
    <ligand>
        <name>ATP</name>
        <dbReference type="ChEBI" id="CHEBI:30616"/>
        <label>1</label>
    </ligand>
</feature>
<feature type="binding site" evidence="2">
    <location>
        <begin position="1033"/>
        <end position="1040"/>
    </location>
    <ligand>
        <name>ATP</name>
        <dbReference type="ChEBI" id="CHEBI:30616"/>
        <label>2</label>
    </ligand>
</feature>
<feature type="glycosylation site" description="N-linked (GlcNAc...) asparagine" evidence="1">
    <location>
        <position position="48"/>
    </location>
</feature>
<feature type="glycosylation site" description="N-linked (GlcNAc...) asparagine" evidence="1">
    <location>
        <position position="571"/>
    </location>
</feature>
<feature type="glycosylation site" description="N-linked (GlcNAc...) asparagine" evidence="1">
    <location>
        <position position="632"/>
    </location>
</feature>
<feature type="glycosylation site" description="N-linked (GlcNAc...) asparagine" evidence="1">
    <location>
        <position position="648"/>
    </location>
</feature>
<feature type="glycosylation site" description="N-linked (GlcNAc...) asparagine" evidence="1">
    <location>
        <position position="773"/>
    </location>
</feature>
<feature type="glycosylation site" description="N-linked (GlcNAc...) asparagine" evidence="1">
    <location>
        <position position="855"/>
    </location>
</feature>
<feature type="glycosylation site" description="N-linked (GlcNAc...) asparagine" evidence="1">
    <location>
        <position position="1187"/>
    </location>
</feature>
<sequence>MRSQAKTETVSSKSSRNTHVIFRFADWIDIVLMVLGSVGAIGDGMSTNVSLVFVSRIMNTLGYSQHNPSSTNFKEEIQKCSLYFVYLGLAILGVAFMEGYCWSKTSERQVMKIRRTYLEAVLRQEVSFFDSDISTSEIIHTISTDTSLIQQLLSEKVPIFLMHISVFITGLVFSAYFSWRLTVVAIPTLVLLLIPGLIYGKYLVHLSKKSFKEYTKANSIVEQALSSIKTILSFTAETQIIKKYSEVLERHKKLGLKQGLAKGLAVGSSGISFTIWAFLAWYGSRLVMHKQETGGRIYAAGISFVLGGISLGTALTEIRYFSEASVAAARICSRIDRISEIDGEDTKKGFIPGEKMKGRVEFERVTLVYLSRPETIILKDFTLTVDVGQSVALMGASGSGKSTVIALLQRFYDPCEGFVRIDGFDIKTLQLKWMRQHIGVVSQDHALFGTSIMENLMFGKNKASMDEVISAAKAANAHGFITQLPNGYDTHIGNRGALLSGGQKQRIAIARAIIRNPVILLLDEATSALDGESETLIQNALDQVAAGRTTLVVAHKLSTVRGANIIAMLENGSVRELGSHEDLMTKNNHYAKLVKLQRQFGHEHQQDLQDRVNSPEIQQRWSTMNSVIRLSNRSSPDLIVSPITLESNHTTKINENIPSTSFTRLLPFVSPEWKSSLVGCISATTFGAIQPVYALSIGGMISAFFAKSSQEMQDKIHIYSLIFISLTFLSITLNLLQHYSFAKMGERLMQRLRLKMLEKIFTFEPAWFDVEENFTSEICSRLNNEVSIVKSLVADRISLLVQTISGVTIAMIIGLLISWKLALVMIAVQPLSILCFYTKKVLLSKISNNYAYAQNRSSQIASEAIYNHKIVTSLGSTKKIIEIFDNAQYEAKRKGRKAAWLAGFGMGSAQCLTFLTWALDFWYGGVLVQKGEISAGDVFKTFFVLVSTGKVIAEAGSMTSDLAKGTAAISSVFNILDRPSSHENTNHGEKMGTIQGRIELKNIDFSYPNRPSILVLRDFSLDIKPGTSIGLVGTSGCGKSTVIALIQRFYDVEIGCVKIDSENLRDINIKWYRKHTALVSQEPVVYSGSIQDNIILGRPEATEDEVVEAAKAANAHDFISAMEKGYKTECGERGVQLSGGQKQRIAIARAFLRSPIILLLDEVTSSLDSNSEQEVQDALARIMASRNMTTVVVAHRLNTLKNLDCIALIVDGTVIETGSYDHLKNIGGQFSRLAHAHDLKS</sequence>
<reference key="1">
    <citation type="submission" date="2000-05" db="EMBL/GenBank/DDBJ databases">
        <title>Structural analysis of Arabidopsis thaliana chromosome 3. III.</title>
        <authorList>
            <person name="Nakamura Y."/>
        </authorList>
    </citation>
    <scope>NUCLEOTIDE SEQUENCE [LARGE SCALE GENOMIC DNA]</scope>
    <source>
        <strain>cv. Columbia</strain>
    </source>
</reference>
<reference key="2">
    <citation type="journal article" date="2017" name="Plant J.">
        <title>Araport11: a complete reannotation of the Arabidopsis thaliana reference genome.</title>
        <authorList>
            <person name="Cheng C.Y."/>
            <person name="Krishnakumar V."/>
            <person name="Chan A.P."/>
            <person name="Thibaud-Nissen F."/>
            <person name="Schobel S."/>
            <person name="Town C.D."/>
        </authorList>
    </citation>
    <scope>GENOME REANNOTATION</scope>
    <source>
        <strain>cv. Columbia</strain>
    </source>
</reference>
<reference key="3">
    <citation type="journal article" date="2001" name="J. Biol. Chem.">
        <title>The Arabidopsis thaliana ABC protein superfamily, a complete inventory.</title>
        <authorList>
            <person name="Sanchez-Fernandez R."/>
            <person name="Davies T.G."/>
            <person name="Coleman J.O."/>
            <person name="Rea P.A."/>
        </authorList>
    </citation>
    <scope>GENE FAMILY</scope>
    <scope>NOMENCLATURE</scope>
</reference>
<reference key="4">
    <citation type="journal article" date="2008" name="Trends Plant Sci.">
        <title>Plant ABC proteins - a unified nomenclature and updated inventory.</title>
        <authorList>
            <person name="Verrier P.J."/>
            <person name="Bird D."/>
            <person name="Burla B."/>
            <person name="Dassa E."/>
            <person name="Forestier C."/>
            <person name="Geisler M."/>
            <person name="Klein M."/>
            <person name="Kolukisaoglu H.U."/>
            <person name="Lee Y."/>
            <person name="Martinoia E."/>
            <person name="Murphy A."/>
            <person name="Rea P.A."/>
            <person name="Samuels L."/>
            <person name="Schulz B."/>
            <person name="Spalding E.J."/>
            <person name="Yazaki K."/>
            <person name="Theodoulou F.L."/>
        </authorList>
    </citation>
    <scope>GENE FAMILY</scope>
    <scope>NOMENCLATURE</scope>
</reference>
<protein>
    <recommendedName>
        <fullName>Putative ABC transporter B family member 8</fullName>
        <shortName>ABC transporter ABCB.8</shortName>
        <shortName>AtABCB8</shortName>
    </recommendedName>
    <alternativeName>
        <fullName>P-glycoprotein 8</fullName>
    </alternativeName>
    <alternativeName>
        <fullName>Putative multidrug resistance protein 22</fullName>
    </alternativeName>
</protein>
<name>AB8B_ARATH</name>
<evidence type="ECO:0000255" key="1"/>
<evidence type="ECO:0000255" key="2">
    <source>
        <dbReference type="PROSITE-ProRule" id="PRU00434"/>
    </source>
</evidence>
<evidence type="ECO:0000255" key="3">
    <source>
        <dbReference type="PROSITE-ProRule" id="PRU00441"/>
    </source>
</evidence>
<evidence type="ECO:0000305" key="4"/>
<proteinExistence type="uncertain"/>
<organism>
    <name type="scientific">Arabidopsis thaliana</name>
    <name type="common">Mouse-ear cress</name>
    <dbReference type="NCBI Taxonomy" id="3702"/>
    <lineage>
        <taxon>Eukaryota</taxon>
        <taxon>Viridiplantae</taxon>
        <taxon>Streptophyta</taxon>
        <taxon>Embryophyta</taxon>
        <taxon>Tracheophyta</taxon>
        <taxon>Spermatophyta</taxon>
        <taxon>Magnoliopsida</taxon>
        <taxon>eudicotyledons</taxon>
        <taxon>Gunneridae</taxon>
        <taxon>Pentapetalae</taxon>
        <taxon>rosids</taxon>
        <taxon>malvids</taxon>
        <taxon>Brassicales</taxon>
        <taxon>Brassicaceae</taxon>
        <taxon>Camelineae</taxon>
        <taxon>Arabidopsis</taxon>
    </lineage>
</organism>
<gene>
    <name type="primary">ABCB8</name>
    <name type="synonym">MDR22</name>
    <name type="synonym">PGP8</name>
    <name type="ordered locus">At3g30875</name>
    <name type="ORF">MJI6.16</name>
</gene>